<keyword id="KW-0156">Chromatin regulator</keyword>
<keyword id="KW-0223">Dioxygenase</keyword>
<keyword id="KW-0408">Iron</keyword>
<keyword id="KW-0479">Metal-binding</keyword>
<keyword id="KW-0539">Nucleus</keyword>
<keyword id="KW-0560">Oxidoreductase</keyword>
<keyword id="KW-0611">Plant defense</keyword>
<keyword id="KW-1185">Reference proteome</keyword>
<keyword id="KW-0677">Repeat</keyword>
<keyword id="KW-0346">Stress response</keyword>
<keyword id="KW-0804">Transcription</keyword>
<keyword id="KW-0805">Transcription regulation</keyword>
<keyword id="KW-0862">Zinc</keyword>
<keyword id="KW-0863">Zinc-finger</keyword>
<reference key="1">
    <citation type="journal article" date="2002" name="Nature">
        <title>The genome sequence and structure of rice chromosome 1.</title>
        <authorList>
            <person name="Sasaki T."/>
            <person name="Matsumoto T."/>
            <person name="Yamamoto K."/>
            <person name="Sakata K."/>
            <person name="Baba T."/>
            <person name="Katayose Y."/>
            <person name="Wu J."/>
            <person name="Niimura Y."/>
            <person name="Cheng Z."/>
            <person name="Nagamura Y."/>
            <person name="Antonio B.A."/>
            <person name="Kanamori H."/>
            <person name="Hosokawa S."/>
            <person name="Masukawa M."/>
            <person name="Arikawa K."/>
            <person name="Chiden Y."/>
            <person name="Hayashi M."/>
            <person name="Okamoto M."/>
            <person name="Ando T."/>
            <person name="Aoki H."/>
            <person name="Arita K."/>
            <person name="Hamada M."/>
            <person name="Harada C."/>
            <person name="Hijishita S."/>
            <person name="Honda M."/>
            <person name="Ichikawa Y."/>
            <person name="Idonuma A."/>
            <person name="Iijima M."/>
            <person name="Ikeda M."/>
            <person name="Ikeno M."/>
            <person name="Ito S."/>
            <person name="Ito T."/>
            <person name="Ito Y."/>
            <person name="Ito Y."/>
            <person name="Iwabuchi A."/>
            <person name="Kamiya K."/>
            <person name="Karasawa W."/>
            <person name="Katagiri S."/>
            <person name="Kikuta A."/>
            <person name="Kobayashi N."/>
            <person name="Kono I."/>
            <person name="Machita K."/>
            <person name="Maehara T."/>
            <person name="Mizuno H."/>
            <person name="Mizubayashi T."/>
            <person name="Mukai Y."/>
            <person name="Nagasaki H."/>
            <person name="Nakashima M."/>
            <person name="Nakama Y."/>
            <person name="Nakamichi Y."/>
            <person name="Nakamura M."/>
            <person name="Namiki N."/>
            <person name="Negishi M."/>
            <person name="Ohta I."/>
            <person name="Ono N."/>
            <person name="Saji S."/>
            <person name="Sakai K."/>
            <person name="Shibata M."/>
            <person name="Shimokawa T."/>
            <person name="Shomura A."/>
            <person name="Song J."/>
            <person name="Takazaki Y."/>
            <person name="Terasawa K."/>
            <person name="Tsuji K."/>
            <person name="Waki K."/>
            <person name="Yamagata H."/>
            <person name="Yamane H."/>
            <person name="Yoshiki S."/>
            <person name="Yoshihara R."/>
            <person name="Yukawa K."/>
            <person name="Zhong H."/>
            <person name="Iwama H."/>
            <person name="Endo T."/>
            <person name="Ito H."/>
            <person name="Hahn J.H."/>
            <person name="Kim H.-I."/>
            <person name="Eun M.-Y."/>
            <person name="Yano M."/>
            <person name="Jiang J."/>
            <person name="Gojobori T."/>
        </authorList>
    </citation>
    <scope>NUCLEOTIDE SEQUENCE [LARGE SCALE GENOMIC DNA]</scope>
    <source>
        <strain>cv. Nipponbare</strain>
    </source>
</reference>
<reference key="2">
    <citation type="journal article" date="2005" name="Nature">
        <title>The map-based sequence of the rice genome.</title>
        <authorList>
            <consortium name="International rice genome sequencing project (IRGSP)"/>
        </authorList>
    </citation>
    <scope>NUCLEOTIDE SEQUENCE [LARGE SCALE GENOMIC DNA]</scope>
    <source>
        <strain>cv. Nipponbare</strain>
    </source>
</reference>
<reference key="3">
    <citation type="journal article" date="2008" name="Nucleic Acids Res.">
        <title>The rice annotation project database (RAP-DB): 2008 update.</title>
        <authorList>
            <consortium name="The rice annotation project (RAP)"/>
        </authorList>
    </citation>
    <scope>GENOME REANNOTATION</scope>
    <source>
        <strain>cv. Nipponbare</strain>
    </source>
</reference>
<reference key="4">
    <citation type="journal article" date="2013" name="Rice">
        <title>Improvement of the Oryza sativa Nipponbare reference genome using next generation sequence and optical map data.</title>
        <authorList>
            <person name="Kawahara Y."/>
            <person name="de la Bastide M."/>
            <person name="Hamilton J.P."/>
            <person name="Kanamori H."/>
            <person name="McCombie W.R."/>
            <person name="Ouyang S."/>
            <person name="Schwartz D.C."/>
            <person name="Tanaka T."/>
            <person name="Wu J."/>
            <person name="Zhou S."/>
            <person name="Childs K.L."/>
            <person name="Davidson R.M."/>
            <person name="Lin H."/>
            <person name="Quesada-Ocampo L."/>
            <person name="Vaillancourt B."/>
            <person name="Sakai H."/>
            <person name="Lee S.S."/>
            <person name="Kim J."/>
            <person name="Numa H."/>
            <person name="Itoh T."/>
            <person name="Buell C.R."/>
            <person name="Matsumoto T."/>
        </authorList>
    </citation>
    <scope>GENOME REANNOTATION</scope>
    <source>
        <strain>cv. Nipponbare</strain>
    </source>
</reference>
<reference key="5">
    <citation type="journal article" date="2005" name="PLoS Biol.">
        <title>The genomes of Oryza sativa: a history of duplications.</title>
        <authorList>
            <person name="Yu J."/>
            <person name="Wang J."/>
            <person name="Lin W."/>
            <person name="Li S."/>
            <person name="Li H."/>
            <person name="Zhou J."/>
            <person name="Ni P."/>
            <person name="Dong W."/>
            <person name="Hu S."/>
            <person name="Zeng C."/>
            <person name="Zhang J."/>
            <person name="Zhang Y."/>
            <person name="Li R."/>
            <person name="Xu Z."/>
            <person name="Li S."/>
            <person name="Li X."/>
            <person name="Zheng H."/>
            <person name="Cong L."/>
            <person name="Lin L."/>
            <person name="Yin J."/>
            <person name="Geng J."/>
            <person name="Li G."/>
            <person name="Shi J."/>
            <person name="Liu J."/>
            <person name="Lv H."/>
            <person name="Li J."/>
            <person name="Wang J."/>
            <person name="Deng Y."/>
            <person name="Ran L."/>
            <person name="Shi X."/>
            <person name="Wang X."/>
            <person name="Wu Q."/>
            <person name="Li C."/>
            <person name="Ren X."/>
            <person name="Wang J."/>
            <person name="Wang X."/>
            <person name="Li D."/>
            <person name="Liu D."/>
            <person name="Zhang X."/>
            <person name="Ji Z."/>
            <person name="Zhao W."/>
            <person name="Sun Y."/>
            <person name="Zhang Z."/>
            <person name="Bao J."/>
            <person name="Han Y."/>
            <person name="Dong L."/>
            <person name="Ji J."/>
            <person name="Chen P."/>
            <person name="Wu S."/>
            <person name="Liu J."/>
            <person name="Xiao Y."/>
            <person name="Bu D."/>
            <person name="Tan J."/>
            <person name="Yang L."/>
            <person name="Ye C."/>
            <person name="Zhang J."/>
            <person name="Xu J."/>
            <person name="Zhou Y."/>
            <person name="Yu Y."/>
            <person name="Zhang B."/>
            <person name="Zhuang S."/>
            <person name="Wei H."/>
            <person name="Liu B."/>
            <person name="Lei M."/>
            <person name="Yu H."/>
            <person name="Li Y."/>
            <person name="Xu H."/>
            <person name="Wei S."/>
            <person name="He X."/>
            <person name="Fang L."/>
            <person name="Zhang Z."/>
            <person name="Zhang Y."/>
            <person name="Huang X."/>
            <person name="Su Z."/>
            <person name="Tong W."/>
            <person name="Li J."/>
            <person name="Tong Z."/>
            <person name="Li S."/>
            <person name="Ye J."/>
            <person name="Wang L."/>
            <person name="Fang L."/>
            <person name="Lei T."/>
            <person name="Chen C.-S."/>
            <person name="Chen H.-C."/>
            <person name="Xu Z."/>
            <person name="Li H."/>
            <person name="Huang H."/>
            <person name="Zhang F."/>
            <person name="Xu H."/>
            <person name="Li N."/>
            <person name="Zhao C."/>
            <person name="Li S."/>
            <person name="Dong L."/>
            <person name="Huang Y."/>
            <person name="Li L."/>
            <person name="Xi Y."/>
            <person name="Qi Q."/>
            <person name="Li W."/>
            <person name="Zhang B."/>
            <person name="Hu W."/>
            <person name="Zhang Y."/>
            <person name="Tian X."/>
            <person name="Jiao Y."/>
            <person name="Liang X."/>
            <person name="Jin J."/>
            <person name="Gao L."/>
            <person name="Zheng W."/>
            <person name="Hao B."/>
            <person name="Liu S.-M."/>
            <person name="Wang W."/>
            <person name="Yuan L."/>
            <person name="Cao M."/>
            <person name="McDermott J."/>
            <person name="Samudrala R."/>
            <person name="Wang J."/>
            <person name="Wong G.K.-S."/>
            <person name="Yang H."/>
        </authorList>
    </citation>
    <scope>NUCLEOTIDE SEQUENCE [LARGE SCALE GENOMIC DNA]</scope>
    <source>
        <strain>cv. Nipponbare</strain>
    </source>
</reference>
<reference key="6">
    <citation type="journal article" date="2003" name="Science">
        <title>Collection, mapping, and annotation of over 28,000 cDNA clones from japonica rice.</title>
        <authorList>
            <consortium name="The rice full-length cDNA consortium"/>
        </authorList>
    </citation>
    <scope>NUCLEOTIDE SEQUENCE [LARGE SCALE MRNA]</scope>
    <source>
        <strain>cv. Nipponbare</strain>
    </source>
</reference>
<reference key="7">
    <citation type="journal article" date="2013" name="Plant Cell">
        <title>Jumonji C domain protein JMJ705-mediated removal of histone H3 lysine 27 trimethylation is involved in defense-related gene activation in rice.</title>
        <authorList>
            <person name="Li T."/>
            <person name="Chen X."/>
            <person name="Zhong X."/>
            <person name="Zhao Y."/>
            <person name="Liu X."/>
            <person name="Zhou S."/>
            <person name="Cheng S."/>
            <person name="Zhou D.X."/>
        </authorList>
    </citation>
    <scope>FUNCTION</scope>
    <scope>CATALYTIC ACTIVITY</scope>
    <scope>SUBCELLULAR LOCATION</scope>
    <scope>TISSUE SPECIFICITY</scope>
    <scope>INDUCTION</scope>
    <scope>DISRUPTION PHENOTYPE</scope>
    <scope>MUTAGENESIS OF HIS-244</scope>
    <source>
        <strain>cv. Hwayoung</strain>
        <strain>cv. Zhonghua 11</strain>
    </source>
</reference>
<proteinExistence type="evidence at protein level"/>
<evidence type="ECO:0000250" key="1">
    <source>
        <dbReference type="UniProtKB" id="Q53WJ1"/>
    </source>
</evidence>
<evidence type="ECO:0000255" key="2">
    <source>
        <dbReference type="PROSITE-ProRule" id="PRU00042"/>
    </source>
</evidence>
<evidence type="ECO:0000255" key="3">
    <source>
        <dbReference type="PROSITE-ProRule" id="PRU00537"/>
    </source>
</evidence>
<evidence type="ECO:0000255" key="4">
    <source>
        <dbReference type="PROSITE-ProRule" id="PRU00538"/>
    </source>
</evidence>
<evidence type="ECO:0000256" key="5">
    <source>
        <dbReference type="SAM" id="MobiDB-lite"/>
    </source>
</evidence>
<evidence type="ECO:0000269" key="6">
    <source>
    </source>
</evidence>
<evidence type="ECO:0000305" key="7"/>
<accession>Q5N712</accession>
<accession>A0A0P0VBR2</accession>
<accession>Q8LIW4</accession>
<name>JM705_ORYSJ</name>
<feature type="chain" id="PRO_0000430001" description="Lysine-specific demethylase JMJ705">
    <location>
        <begin position="1"/>
        <end position="1286"/>
    </location>
</feature>
<feature type="domain" description="JmjN" evidence="3">
    <location>
        <begin position="25"/>
        <end position="66"/>
    </location>
</feature>
<feature type="domain" description="JmjC" evidence="4">
    <location>
        <begin position="201"/>
        <end position="367"/>
    </location>
</feature>
<feature type="zinc finger region" description="C2H2-type 1; degenerate" evidence="2">
    <location>
        <begin position="1167"/>
        <end position="1189"/>
    </location>
</feature>
<feature type="zinc finger region" description="C2H2-type 2" evidence="2">
    <location>
        <begin position="1190"/>
        <end position="1214"/>
    </location>
</feature>
<feature type="zinc finger region" description="C2H2-type 3" evidence="2">
    <location>
        <begin position="1220"/>
        <end position="1244"/>
    </location>
</feature>
<feature type="zinc finger region" description="C2H2-type 4" evidence="2">
    <location>
        <begin position="1250"/>
        <end position="1276"/>
    </location>
</feature>
<feature type="region of interest" description="Disordered" evidence="5">
    <location>
        <begin position="82"/>
        <end position="105"/>
    </location>
</feature>
<feature type="region of interest" description="Disordered" evidence="5">
    <location>
        <begin position="641"/>
        <end position="686"/>
    </location>
</feature>
<feature type="region of interest" description="Disordered" evidence="5">
    <location>
        <begin position="1013"/>
        <end position="1060"/>
    </location>
</feature>
<feature type="region of interest" description="Disordered" evidence="5">
    <location>
        <begin position="1077"/>
        <end position="1164"/>
    </location>
</feature>
<feature type="compositionally biased region" description="Polar residues" evidence="5">
    <location>
        <begin position="641"/>
        <end position="679"/>
    </location>
</feature>
<feature type="compositionally biased region" description="Polar residues" evidence="5">
    <location>
        <begin position="1119"/>
        <end position="1136"/>
    </location>
</feature>
<feature type="binding site" evidence="4">
    <location>
        <position position="244"/>
    </location>
    <ligand>
        <name>Fe cation</name>
        <dbReference type="ChEBI" id="CHEBI:24875"/>
        <note>catalytic</note>
    </ligand>
</feature>
<feature type="binding site" evidence="4">
    <location>
        <position position="246"/>
    </location>
    <ligand>
        <name>Fe cation</name>
        <dbReference type="ChEBI" id="CHEBI:24875"/>
        <note>catalytic</note>
    </ligand>
</feature>
<feature type="binding site" evidence="4">
    <location>
        <position position="335"/>
    </location>
    <ligand>
        <name>Fe cation</name>
        <dbReference type="ChEBI" id="CHEBI:24875"/>
        <note>catalytic</note>
    </ligand>
</feature>
<feature type="mutagenesis site" description="Loss of activity on H3K27me3/2." evidence="6">
    <original>H</original>
    <variation>A</variation>
    <location>
        <position position="244"/>
    </location>
</feature>
<feature type="sequence conflict" description="In Ref. 6; AK068952." evidence="7" ref="6">
    <original>K</original>
    <variation>R</variation>
    <location>
        <position position="726"/>
    </location>
</feature>
<gene>
    <name type="primary">JMJ705</name>
    <name type="ordered locus">Os01g0907400</name>
    <name type="ordered locus">LOC_Os01g67970</name>
    <name type="ORF">B1417F08.20</name>
    <name type="ORF">OsJ_04472</name>
    <name type="ORF">P0497A05.7</name>
</gene>
<dbReference type="EC" id="1.14.11.68" evidence="6"/>
<dbReference type="EMBL" id="AP003380">
    <property type="protein sequence ID" value="BAB92564.1"/>
    <property type="status" value="ALT_SEQ"/>
    <property type="molecule type" value="Genomic_DNA"/>
</dbReference>
<dbReference type="EMBL" id="AP006531">
    <property type="protein sequence ID" value="BAD82744.1"/>
    <property type="molecule type" value="Genomic_DNA"/>
</dbReference>
<dbReference type="EMBL" id="AP008207">
    <property type="protein sequence ID" value="BAF07051.1"/>
    <property type="molecule type" value="Genomic_DNA"/>
</dbReference>
<dbReference type="EMBL" id="AP014957">
    <property type="protein sequence ID" value="BAS75802.1"/>
    <property type="molecule type" value="Genomic_DNA"/>
</dbReference>
<dbReference type="EMBL" id="CM000138">
    <property type="protein sequence ID" value="EEE55852.1"/>
    <property type="molecule type" value="Genomic_DNA"/>
</dbReference>
<dbReference type="EMBL" id="AK068952">
    <property type="status" value="NOT_ANNOTATED_CDS"/>
    <property type="molecule type" value="mRNA"/>
</dbReference>
<dbReference type="RefSeq" id="XP_015621377.1">
    <property type="nucleotide sequence ID" value="XM_015765891.1"/>
</dbReference>
<dbReference type="SMR" id="Q5N712"/>
<dbReference type="FunCoup" id="Q5N712">
    <property type="interactions" value="2374"/>
</dbReference>
<dbReference type="STRING" id="39947.Q5N712"/>
<dbReference type="PaxDb" id="39947-Q5N712"/>
<dbReference type="EnsemblPlants" id="Os01t0907400-01">
    <property type="protein sequence ID" value="Os01t0907400-01"/>
    <property type="gene ID" value="Os01g0907400"/>
</dbReference>
<dbReference type="Gramene" id="Os01t0907400-01">
    <property type="protein sequence ID" value="Os01t0907400-01"/>
    <property type="gene ID" value="Os01g0907400"/>
</dbReference>
<dbReference type="KEGG" id="dosa:Os01g0907400"/>
<dbReference type="eggNOG" id="KOG1246">
    <property type="taxonomic scope" value="Eukaryota"/>
</dbReference>
<dbReference type="eggNOG" id="KOG1721">
    <property type="taxonomic scope" value="Eukaryota"/>
</dbReference>
<dbReference type="HOGENOM" id="CLU_001687_1_0_1"/>
<dbReference type="InParanoid" id="Q5N712"/>
<dbReference type="OMA" id="MRFREPS"/>
<dbReference type="OrthoDB" id="9547406at2759"/>
<dbReference type="Proteomes" id="UP000000763">
    <property type="component" value="Chromosome 1"/>
</dbReference>
<dbReference type="Proteomes" id="UP000007752">
    <property type="component" value="Chromosome 1"/>
</dbReference>
<dbReference type="Proteomes" id="UP000059680">
    <property type="component" value="Chromosome 1"/>
</dbReference>
<dbReference type="GO" id="GO:0000785">
    <property type="term" value="C:chromatin"/>
    <property type="evidence" value="ECO:0000318"/>
    <property type="project" value="GO_Central"/>
</dbReference>
<dbReference type="GO" id="GO:0005634">
    <property type="term" value="C:nucleus"/>
    <property type="evidence" value="ECO:0000314"/>
    <property type="project" value="UniProtKB"/>
</dbReference>
<dbReference type="GO" id="GO:0071558">
    <property type="term" value="F:histone H3K27me2/H3K27me3 demethylase activity"/>
    <property type="evidence" value="ECO:0000314"/>
    <property type="project" value="UniProtKB"/>
</dbReference>
<dbReference type="GO" id="GO:0034647">
    <property type="term" value="F:histone H3K4me/H3K4me2/H3K4me3 demethylase activity"/>
    <property type="evidence" value="ECO:0000318"/>
    <property type="project" value="GO_Central"/>
</dbReference>
<dbReference type="GO" id="GO:0008270">
    <property type="term" value="F:zinc ion binding"/>
    <property type="evidence" value="ECO:0007669"/>
    <property type="project" value="UniProtKB-KW"/>
</dbReference>
<dbReference type="GO" id="GO:0006338">
    <property type="term" value="P:chromatin remodeling"/>
    <property type="evidence" value="ECO:0000318"/>
    <property type="project" value="GO_Central"/>
</dbReference>
<dbReference type="GO" id="GO:0006952">
    <property type="term" value="P:defense response"/>
    <property type="evidence" value="ECO:0007669"/>
    <property type="project" value="UniProtKB-KW"/>
</dbReference>
<dbReference type="GO" id="GO:0040010">
    <property type="term" value="P:positive regulation of growth rate"/>
    <property type="evidence" value="ECO:0000315"/>
    <property type="project" value="UniProtKB"/>
</dbReference>
<dbReference type="GO" id="GO:0010468">
    <property type="term" value="P:regulation of gene expression"/>
    <property type="evidence" value="ECO:0000318"/>
    <property type="project" value="GO_Central"/>
</dbReference>
<dbReference type="GO" id="GO:0045815">
    <property type="term" value="P:transcription initiation-coupled chromatin remodeling"/>
    <property type="evidence" value="ECO:0000314"/>
    <property type="project" value="UniProtKB"/>
</dbReference>
<dbReference type="FunFam" id="2.60.120.650:FF:000023">
    <property type="entry name" value="Probable lysine-specific demethylase ELF6"/>
    <property type="match status" value="1"/>
</dbReference>
<dbReference type="FunFam" id="3.30.160.60:FF:000747">
    <property type="entry name" value="Probable lysine-specific demethylase ELF6"/>
    <property type="match status" value="1"/>
</dbReference>
<dbReference type="Gene3D" id="3.30.160.60">
    <property type="entry name" value="Classic Zinc Finger"/>
    <property type="match status" value="1"/>
</dbReference>
<dbReference type="Gene3D" id="2.60.120.650">
    <property type="entry name" value="Cupin"/>
    <property type="match status" value="1"/>
</dbReference>
<dbReference type="InterPro" id="IPR003347">
    <property type="entry name" value="JmjC_dom"/>
</dbReference>
<dbReference type="InterPro" id="IPR003349">
    <property type="entry name" value="JmjN"/>
</dbReference>
<dbReference type="InterPro" id="IPR036236">
    <property type="entry name" value="Znf_C2H2_sf"/>
</dbReference>
<dbReference type="InterPro" id="IPR013087">
    <property type="entry name" value="Znf_C2H2_type"/>
</dbReference>
<dbReference type="PANTHER" id="PTHR10694">
    <property type="entry name" value="LYSINE-SPECIFIC DEMETHYLASE"/>
    <property type="match status" value="1"/>
</dbReference>
<dbReference type="PANTHER" id="PTHR10694:SF38">
    <property type="entry name" value="LYSINE-SPECIFIC DEMETHYLASE REF6"/>
    <property type="match status" value="1"/>
</dbReference>
<dbReference type="Pfam" id="PF02373">
    <property type="entry name" value="JmjC"/>
    <property type="match status" value="1"/>
</dbReference>
<dbReference type="Pfam" id="PF02375">
    <property type="entry name" value="JmjN"/>
    <property type="match status" value="1"/>
</dbReference>
<dbReference type="SMART" id="SM00558">
    <property type="entry name" value="JmjC"/>
    <property type="match status" value="1"/>
</dbReference>
<dbReference type="SMART" id="SM00545">
    <property type="entry name" value="JmjN"/>
    <property type="match status" value="1"/>
</dbReference>
<dbReference type="SMART" id="SM00355">
    <property type="entry name" value="ZnF_C2H2"/>
    <property type="match status" value="4"/>
</dbReference>
<dbReference type="SUPFAM" id="SSF57667">
    <property type="entry name" value="beta-beta-alpha zinc fingers"/>
    <property type="match status" value="2"/>
</dbReference>
<dbReference type="SUPFAM" id="SSF51197">
    <property type="entry name" value="Clavaminate synthase-like"/>
    <property type="match status" value="1"/>
</dbReference>
<dbReference type="PROSITE" id="PS51184">
    <property type="entry name" value="JMJC"/>
    <property type="match status" value="1"/>
</dbReference>
<dbReference type="PROSITE" id="PS51183">
    <property type="entry name" value="JMJN"/>
    <property type="match status" value="1"/>
</dbReference>
<dbReference type="PROSITE" id="PS00028">
    <property type="entry name" value="ZINC_FINGER_C2H2_1"/>
    <property type="match status" value="3"/>
</dbReference>
<dbReference type="PROSITE" id="PS50157">
    <property type="entry name" value="ZINC_FINGER_C2H2_2"/>
    <property type="match status" value="3"/>
</dbReference>
<organism>
    <name type="scientific">Oryza sativa subsp. japonica</name>
    <name type="common">Rice</name>
    <dbReference type="NCBI Taxonomy" id="39947"/>
    <lineage>
        <taxon>Eukaryota</taxon>
        <taxon>Viridiplantae</taxon>
        <taxon>Streptophyta</taxon>
        <taxon>Embryophyta</taxon>
        <taxon>Tracheophyta</taxon>
        <taxon>Spermatophyta</taxon>
        <taxon>Magnoliopsida</taxon>
        <taxon>Liliopsida</taxon>
        <taxon>Poales</taxon>
        <taxon>Poaceae</taxon>
        <taxon>BOP clade</taxon>
        <taxon>Oryzoideae</taxon>
        <taxon>Oryzeae</taxon>
        <taxon>Oryzinae</taxon>
        <taxon>Oryza</taxon>
        <taxon>Oryza sativa</taxon>
    </lineage>
</organism>
<sequence length="1286" mass="142049">MRPSPPPAAPAAEPVPPWLRSLPVAPEFRPTAAEFADPVSYILKIEPAAAPYGICKVVPPLPPPPKKATFSNLSRSFAALHPDDRSPSFPTRHQQVGLCPRRTRPGLKPVWRSSHRYTLPQFESKAGATRKSLLAGLNFPASRQLTPLDHEVLFWRASADRPIVVEYGSDMSGSGFSPCAAQPQPPPQQQPTARAAAHLGETAWNMRGVARSPGSLLRFMPEDVPGVTTPMLYVGMMFSWFAWHVEDHDLHSLNYMHLGAAKTWYGVPRDAALAFEDVVREHGYGGEVNPLETFATLGQKTTVMSPEVLVESGIPCCRLVQNAGEFVVTFPGSYHCGFSHGFNCGEASNIATPEWLRIAKEAAIRRASINRPPMVSHYQLLYDLALSMRFREPSNGEMETRSSRIKEKKKCEGEQLVKKMFIQNVIEDNELLSHLLNDGSSCIILPANAHDGPGLSTLRSTDQSNMNSRISHNLCSREEAPEASGCLSPNRNGDTRNCISSDTHNMEGDKGDIMSATGLLDQGLLSCVTCGILSFSCVAVLKPRDSTARYLMSADSNSINNQLSISGGSILADAPTNERNGVISRPYSEHCCNEIMADDAEIDKNSALDLLAFAHGGQPDPEEDPLEKILKIAHGINKSQPNSSNNVGCVGTKLSSSSTERQERPSSQNAHCNGSSVISNGPKGVRTRNKYQLKMVLSEGFQAKDIYSAKEKKVQSEPSSSKGDVKETIDVSGTENDVGCKSTTISVSEHRGSTKNMYSVKEKKVQSKPSSLKGTVKETVDVSGTENDARCKSITISVSEHRGSTPMTNSLAASIVKPDKDSSRMHVFCLEHAIEVEKQLHAIGGSNIMLICRPEYPKIEAEARLLGEEMGLVYDWKGIHFKEANMEDRQKIQEVLRDEEAIPTSSDWAVKLGINLYYSANLAKSPLYNKQMPYNRVIYRAFGCDSPNDSPVMFNTCERKQSHQKKIVVAGRWCGKVWMSKQVHPYLAHRVESQEAEEADRICSYHFDEKHKAEPVGNSSRVEASKRKSSSLTDVTESSNRRGEIPGEETNTKRPKHSQENNLRALETAAEVVVPSPAGTGLRVSSRIANRANKLKSKMEKEDVPSSRPKSNIKEKSSHASGQKSNVQEANANSASHLRAMPPKQKAEAEAKKQIRTPKPPKQAVEYSCDIEGCSMSFRTKRDLSLHKSDICPVKGCGKKFFSHKYLLQHRKVHTDDRPLTCPWKGCNMAFKWPWARTEHLRVHTGDRPYVCHEPGCAQTFRFVSDFSRHKRKTGHSVKKKKKAKS</sequence>
<protein>
    <recommendedName>
        <fullName>Lysine-specific demethylase JMJ705</fullName>
        <ecNumber evidence="6">1.14.11.68</ecNumber>
    </recommendedName>
    <alternativeName>
        <fullName>Jumonji domain-containing protein 705</fullName>
    </alternativeName>
    <alternativeName>
        <fullName>Lysine-specific histone demethylase JMJ705</fullName>
    </alternativeName>
    <alternativeName>
        <fullName>Protein JUMONJI 705</fullName>
    </alternativeName>
    <alternativeName>
        <fullName evidence="7">[histone H3]-trimethyl-L-lysine(27) demethylase JMJ705</fullName>
    </alternativeName>
</protein>
<comment type="function">
    <text evidence="6">Histone demethylase that demethylates 'Lys-27' (H3K27me) of histone H3 with a specific activity for H3K27me3 and H3K27me2. No activity on H3K4me3, H3K9me3, H3K27me1 and H3K36me3. Involved in biotic stress response. May demethylate H3K27me3-marked defense-related genes and increase their basal and induced expression levels during pathogen infection.</text>
</comment>
<comment type="catalytic activity">
    <reaction evidence="6">
        <text>N(6),N(6),N(6)-trimethyl-L-lysyl(27)-[histone H3] + 2 2-oxoglutarate + 2 O2 = N(6)-methyl-L-lysyl(27)-[histone H3] + 2 formaldehyde + 2 succinate + 2 CO2</text>
        <dbReference type="Rhea" id="RHEA:60224"/>
        <dbReference type="Rhea" id="RHEA-COMP:15535"/>
        <dbReference type="Rhea" id="RHEA-COMP:15544"/>
        <dbReference type="ChEBI" id="CHEBI:15379"/>
        <dbReference type="ChEBI" id="CHEBI:16526"/>
        <dbReference type="ChEBI" id="CHEBI:16810"/>
        <dbReference type="ChEBI" id="CHEBI:16842"/>
        <dbReference type="ChEBI" id="CHEBI:30031"/>
        <dbReference type="ChEBI" id="CHEBI:61929"/>
        <dbReference type="ChEBI" id="CHEBI:61961"/>
        <dbReference type="EC" id="1.14.11.68"/>
    </reaction>
    <physiologicalReaction direction="left-to-right" evidence="6">
        <dbReference type="Rhea" id="RHEA:60225"/>
    </physiologicalReaction>
</comment>
<comment type="cofactor">
    <cofactor evidence="1">
        <name>Fe(2+)</name>
        <dbReference type="ChEBI" id="CHEBI:29033"/>
    </cofactor>
    <text evidence="1">Binds 1 Fe(2+) ion per subunit.</text>
</comment>
<comment type="subcellular location">
    <subcellularLocation>
        <location evidence="3 6">Nucleus</location>
    </subcellularLocation>
</comment>
<comment type="tissue specificity">
    <text evidence="6">Expressed in leaves and flag leaves. Expressed at low levels in roots, shoots, stems and panicles.</text>
</comment>
<comment type="induction">
    <text evidence="6">By salt stress, abscisic acid (ABA), jasmonic acid (JA), the ethylene precursor ACC and infection by the bacterial pathogen Xanthomonas oryzae pv. oryzae.</text>
</comment>
<comment type="disruption phenotype">
    <text evidence="6">Reduced plant height, panicle length, spikelets per panicle and spikelet fertility. Increased susceptibility to the bacterial pathogen Xanthomonas oryzae pv. oryzae.</text>
</comment>
<comment type="miscellaneous">
    <text>Plants over-expressing JMJ705 display a leaf lesion-mimic phenotype in mature leaves, have high levels of biotic stress-responsive and defense-related genes leading to enhanced plant resistance to the bacterial pathogen Xanthomonas oryzae pv. oryzae.</text>
</comment>
<comment type="sequence caution" evidence="7">
    <conflict type="erroneous gene model prediction">
        <sequence resource="EMBL-CDS" id="BAB92564"/>
    </conflict>
</comment>